<reference key="1">
    <citation type="journal article" date="2010" name="J. Bacteriol.">
        <title>Genome sequence of the deep-rooted Yersinia pestis strain Angola reveals new insights into the evolution and pangenome of the plague bacterium.</title>
        <authorList>
            <person name="Eppinger M."/>
            <person name="Worsham P.L."/>
            <person name="Nikolich M.P."/>
            <person name="Riley D.R."/>
            <person name="Sebastian Y."/>
            <person name="Mou S."/>
            <person name="Achtman M."/>
            <person name="Lindler L.E."/>
            <person name="Ravel J."/>
        </authorList>
    </citation>
    <scope>NUCLEOTIDE SEQUENCE [LARGE SCALE GENOMIC DNA]</scope>
    <source>
        <strain>Angola</strain>
    </source>
</reference>
<evidence type="ECO:0000255" key="1">
    <source>
        <dbReference type="HAMAP-Rule" id="MF_00019"/>
    </source>
</evidence>
<sequence>MACLTLALDAMGGDFGPCVTVPASLQALASNPQLKLLLVGNPDTITPLLANADSLLLERLQVIPAEHVIASDAKPSQAIRASRGTSMRVALELVKNGEAAACVSAGNTGALMGLAKMMIKPLEGIARPALMTVIPNQRRSKTVVLDLGANVECDSTMLVQFAVMGSVMAEEVVGIVEPRVALLNIGEEENKGLDNIREAAAVLKNTPAINYIGYLEGNDLLTGKTDVMVCDGFVGNVTLKTMEGVIRMFLSLLKPSGEGSKQSWWLKLIGRWLQKRVAKRFGHLNPDQYNGACLLGLRGIVIKSHGAANQRAFAVAIEQAVQAVQRQVPERIAARLEAVLPKSD</sequence>
<name>PLSX_YERPG</name>
<gene>
    <name evidence="1" type="primary">plsX</name>
    <name type="ordered locus">YpAngola_A3502</name>
</gene>
<comment type="function">
    <text evidence="1">Catalyzes the reversible formation of acyl-phosphate (acyl-PO(4)) from acyl-[acyl-carrier-protein] (acyl-ACP). This enzyme utilizes acyl-ACP as fatty acyl donor, but not acyl-CoA.</text>
</comment>
<comment type="catalytic activity">
    <reaction evidence="1">
        <text>a fatty acyl-[ACP] + phosphate = an acyl phosphate + holo-[ACP]</text>
        <dbReference type="Rhea" id="RHEA:42292"/>
        <dbReference type="Rhea" id="RHEA-COMP:9685"/>
        <dbReference type="Rhea" id="RHEA-COMP:14125"/>
        <dbReference type="ChEBI" id="CHEBI:43474"/>
        <dbReference type="ChEBI" id="CHEBI:59918"/>
        <dbReference type="ChEBI" id="CHEBI:64479"/>
        <dbReference type="ChEBI" id="CHEBI:138651"/>
        <dbReference type="EC" id="2.3.1.274"/>
    </reaction>
</comment>
<comment type="pathway">
    <text evidence="1">Lipid metabolism; phospholipid metabolism.</text>
</comment>
<comment type="subunit">
    <text evidence="1">Homodimer. Probably interacts with PlsY.</text>
</comment>
<comment type="subcellular location">
    <subcellularLocation>
        <location evidence="1">Cytoplasm</location>
    </subcellularLocation>
    <text evidence="1">Associated with the membrane possibly through PlsY.</text>
</comment>
<comment type="similarity">
    <text evidence="1">Belongs to the PlsX family.</text>
</comment>
<dbReference type="EC" id="2.3.1.274" evidence="1"/>
<dbReference type="EMBL" id="CP000901">
    <property type="protein sequence ID" value="ABX85560.1"/>
    <property type="molecule type" value="Genomic_DNA"/>
</dbReference>
<dbReference type="RefSeq" id="WP_002210932.1">
    <property type="nucleotide sequence ID" value="NZ_CP009935.1"/>
</dbReference>
<dbReference type="SMR" id="A9R3P9"/>
<dbReference type="GeneID" id="57976975"/>
<dbReference type="KEGG" id="ypg:YpAngola_A3502"/>
<dbReference type="UniPathway" id="UPA00085"/>
<dbReference type="GO" id="GO:0005737">
    <property type="term" value="C:cytoplasm"/>
    <property type="evidence" value="ECO:0007669"/>
    <property type="project" value="UniProtKB-SubCell"/>
</dbReference>
<dbReference type="GO" id="GO:0043811">
    <property type="term" value="F:phosphate:acyl-[acyl carrier protein] acyltransferase activity"/>
    <property type="evidence" value="ECO:0007669"/>
    <property type="project" value="UniProtKB-UniRule"/>
</dbReference>
<dbReference type="GO" id="GO:0006633">
    <property type="term" value="P:fatty acid biosynthetic process"/>
    <property type="evidence" value="ECO:0007669"/>
    <property type="project" value="UniProtKB-UniRule"/>
</dbReference>
<dbReference type="GO" id="GO:0008654">
    <property type="term" value="P:phospholipid biosynthetic process"/>
    <property type="evidence" value="ECO:0007669"/>
    <property type="project" value="UniProtKB-KW"/>
</dbReference>
<dbReference type="FunFam" id="3.40.718.10:FF:000008">
    <property type="entry name" value="Phosphate acyltransferase"/>
    <property type="match status" value="1"/>
</dbReference>
<dbReference type="Gene3D" id="3.40.718.10">
    <property type="entry name" value="Isopropylmalate Dehydrogenase"/>
    <property type="match status" value="1"/>
</dbReference>
<dbReference type="HAMAP" id="MF_00019">
    <property type="entry name" value="PlsX"/>
    <property type="match status" value="1"/>
</dbReference>
<dbReference type="InterPro" id="IPR003664">
    <property type="entry name" value="FA_synthesis"/>
</dbReference>
<dbReference type="InterPro" id="IPR012281">
    <property type="entry name" value="Phospholipid_synth_PlsX-like"/>
</dbReference>
<dbReference type="NCBIfam" id="TIGR00182">
    <property type="entry name" value="plsX"/>
    <property type="match status" value="1"/>
</dbReference>
<dbReference type="PANTHER" id="PTHR30100">
    <property type="entry name" value="FATTY ACID/PHOSPHOLIPID SYNTHESIS PROTEIN PLSX"/>
    <property type="match status" value="1"/>
</dbReference>
<dbReference type="PANTHER" id="PTHR30100:SF1">
    <property type="entry name" value="PHOSPHATE ACYLTRANSFERASE"/>
    <property type="match status" value="1"/>
</dbReference>
<dbReference type="Pfam" id="PF02504">
    <property type="entry name" value="FA_synthesis"/>
    <property type="match status" value="1"/>
</dbReference>
<dbReference type="PIRSF" id="PIRSF002465">
    <property type="entry name" value="Phsphlp_syn_PlsX"/>
    <property type="match status" value="1"/>
</dbReference>
<dbReference type="SUPFAM" id="SSF53659">
    <property type="entry name" value="Isocitrate/Isopropylmalate dehydrogenase-like"/>
    <property type="match status" value="1"/>
</dbReference>
<protein>
    <recommendedName>
        <fullName evidence="1">Phosphate acyltransferase</fullName>
        <ecNumber evidence="1">2.3.1.274</ecNumber>
    </recommendedName>
    <alternativeName>
        <fullName evidence="1">Acyl-ACP phosphotransacylase</fullName>
    </alternativeName>
    <alternativeName>
        <fullName evidence="1">Acyl-[acyl-carrier-protein]--phosphate acyltransferase</fullName>
    </alternativeName>
    <alternativeName>
        <fullName evidence="1">Phosphate-acyl-ACP acyltransferase</fullName>
    </alternativeName>
</protein>
<accession>A9R3P9</accession>
<feature type="chain" id="PRO_1000089953" description="Phosphate acyltransferase">
    <location>
        <begin position="1"/>
        <end position="344"/>
    </location>
</feature>
<organism>
    <name type="scientific">Yersinia pestis bv. Antiqua (strain Angola)</name>
    <dbReference type="NCBI Taxonomy" id="349746"/>
    <lineage>
        <taxon>Bacteria</taxon>
        <taxon>Pseudomonadati</taxon>
        <taxon>Pseudomonadota</taxon>
        <taxon>Gammaproteobacteria</taxon>
        <taxon>Enterobacterales</taxon>
        <taxon>Yersiniaceae</taxon>
        <taxon>Yersinia</taxon>
    </lineage>
</organism>
<keyword id="KW-0963">Cytoplasm</keyword>
<keyword id="KW-0444">Lipid biosynthesis</keyword>
<keyword id="KW-0443">Lipid metabolism</keyword>
<keyword id="KW-0594">Phospholipid biosynthesis</keyword>
<keyword id="KW-1208">Phospholipid metabolism</keyword>
<keyword id="KW-0808">Transferase</keyword>
<proteinExistence type="inferred from homology"/>